<reference key="1">
    <citation type="journal article" date="2013" name="Plant Physiol.">
        <title>A Nostoc punctiforme Sugar Transporter Necessary to Establish a Cyanobacterium-Plant Symbiosis.</title>
        <authorList>
            <person name="Ekman M."/>
            <person name="Picossi S."/>
            <person name="Campbell E.L."/>
            <person name="Meeks J.C."/>
            <person name="Flores E."/>
        </authorList>
    </citation>
    <scope>NUCLEOTIDE SEQUENCE [LARGE SCALE GENOMIC DNA]</scope>
    <source>
        <strain>ATCC 29133 / PCC 73102</strain>
    </source>
</reference>
<reference key="2">
    <citation type="journal article" date="2008" name="J. Bacteriol.">
        <title>Identification of sesquiterpene synthases from Nostoc punctiforme PCC 73102 and Nostoc sp. strain PCC 7120.</title>
        <authorList>
            <person name="Agger S.A."/>
            <person name="Lopez-Gallego F."/>
            <person name="Hoye T.R."/>
            <person name="Schmidt-Dannert C."/>
        </authorList>
    </citation>
    <scope>FUNCTION AS A GERMACRENE A SYNTHASE</scope>
    <scope>CATALYTIC ACTIVITY</scope>
    <scope>BIOPHYSICOCHEMICAL PROPERTIES</scope>
</reference>
<name>GERAS_NOSP7</name>
<accession>B2J4A4</accession>
<keyword id="KW-0456">Lyase</keyword>
<keyword id="KW-0460">Magnesium</keyword>
<keyword id="KW-0479">Metal-binding</keyword>
<keyword id="KW-1185">Reference proteome</keyword>
<dbReference type="EC" id="4.2.3.90"/>
<dbReference type="EMBL" id="CP001037">
    <property type="protein sequence ID" value="ACC82216.1"/>
    <property type="molecule type" value="Genomic_DNA"/>
</dbReference>
<dbReference type="RefSeq" id="WP_012410187.1">
    <property type="nucleotide sequence ID" value="NC_010628.1"/>
</dbReference>
<dbReference type="SMR" id="B2J4A4"/>
<dbReference type="STRING" id="63737.Npun_R3832"/>
<dbReference type="EnsemblBacteria" id="ACC82216">
    <property type="protein sequence ID" value="ACC82216"/>
    <property type="gene ID" value="Npun_R3832"/>
</dbReference>
<dbReference type="KEGG" id="npu:Npun_R3832"/>
<dbReference type="eggNOG" id="COG0664">
    <property type="taxonomic scope" value="Bacteria"/>
</dbReference>
<dbReference type="HOGENOM" id="CLU_042538_4_2_3"/>
<dbReference type="OrthoDB" id="2989600at2"/>
<dbReference type="PhylomeDB" id="B2J4A4"/>
<dbReference type="Proteomes" id="UP000001191">
    <property type="component" value="Chromosome"/>
</dbReference>
<dbReference type="GO" id="GO:0034005">
    <property type="term" value="F:germacrene-A synthase activity"/>
    <property type="evidence" value="ECO:0000314"/>
    <property type="project" value="UniProtKB"/>
</dbReference>
<dbReference type="GO" id="GO:0046872">
    <property type="term" value="F:metal ion binding"/>
    <property type="evidence" value="ECO:0007669"/>
    <property type="project" value="UniProtKB-KW"/>
</dbReference>
<dbReference type="GO" id="GO:0051762">
    <property type="term" value="P:sesquiterpene biosynthetic process"/>
    <property type="evidence" value="ECO:0000314"/>
    <property type="project" value="UniProtKB"/>
</dbReference>
<dbReference type="CDD" id="cd00687">
    <property type="entry name" value="Terpene_cyclase_nonplant_C1"/>
    <property type="match status" value="1"/>
</dbReference>
<dbReference type="FunFam" id="1.10.600.10:FF:000044">
    <property type="entry name" value="(2Z,6E)-hedycaryol synthase"/>
    <property type="match status" value="1"/>
</dbReference>
<dbReference type="Gene3D" id="1.10.600.10">
    <property type="entry name" value="Farnesyl Diphosphate Synthase"/>
    <property type="match status" value="1"/>
</dbReference>
<dbReference type="InterPro" id="IPR008949">
    <property type="entry name" value="Isoprenoid_synthase_dom_sf"/>
</dbReference>
<dbReference type="InterPro" id="IPR034686">
    <property type="entry name" value="Terpene_cyclase-like_2"/>
</dbReference>
<dbReference type="PANTHER" id="PTHR35201:SF4">
    <property type="entry name" value="BETA-PINACENE SYNTHASE-RELATED"/>
    <property type="match status" value="1"/>
</dbReference>
<dbReference type="PANTHER" id="PTHR35201">
    <property type="entry name" value="TERPENE SYNTHASE"/>
    <property type="match status" value="1"/>
</dbReference>
<dbReference type="Pfam" id="PF19086">
    <property type="entry name" value="Terpene_syn_C_2"/>
    <property type="match status" value="1"/>
</dbReference>
<dbReference type="SFLD" id="SFLDS00005">
    <property type="entry name" value="Isoprenoid_Synthase_Type_I"/>
    <property type="match status" value="1"/>
</dbReference>
<dbReference type="SFLD" id="SFLDG01020">
    <property type="entry name" value="Terpene_Cyclase_Like_2"/>
    <property type="match status" value="1"/>
</dbReference>
<dbReference type="SUPFAM" id="SSF48576">
    <property type="entry name" value="Terpenoid synthases"/>
    <property type="match status" value="1"/>
</dbReference>
<comment type="function">
    <text evidence="2">Catalyzes the cyclization of farnesyl diphosphate (FPP) to the sesquiterpene germacrene A.</text>
</comment>
<comment type="catalytic activity">
    <reaction evidence="2">
        <text>(2E,6E)-farnesyl diphosphate = 5-epi-alpha-selinene + diphosphate</text>
        <dbReference type="Rhea" id="RHEA:31819"/>
        <dbReference type="ChEBI" id="CHEBI:33019"/>
        <dbReference type="ChEBI" id="CHEBI:63445"/>
        <dbReference type="ChEBI" id="CHEBI:175763"/>
        <dbReference type="EC" id="4.2.3.90"/>
    </reaction>
</comment>
<comment type="cofactor">
    <cofactor evidence="1">
        <name>Mg(2+)</name>
        <dbReference type="ChEBI" id="CHEBI:18420"/>
    </cofactor>
    <text evidence="1">Binds 3 Mg(2+) ions per subunit.</text>
</comment>
<comment type="biophysicochemical properties">
    <kinetics>
        <KM evidence="2">3.4 uM for FPP (at pH 8)</KM>
        <text>kcat is 0.044 sec(-1) with FPP as substrate (at pH 8).</text>
    </kinetics>
</comment>
<comment type="domain">
    <text>The Asp-Asp-Xaa-Xaa-Asp/Glu (DDXXD/E) motif is important for the catalytic activity, presumably through binding to Mg(2+).</text>
</comment>
<comment type="similarity">
    <text evidence="3">Belongs to the terpene synthase family.</text>
</comment>
<organism>
    <name type="scientific">Nostoc punctiforme (strain ATCC 29133 / PCC 73102)</name>
    <dbReference type="NCBI Taxonomy" id="63737"/>
    <lineage>
        <taxon>Bacteria</taxon>
        <taxon>Bacillati</taxon>
        <taxon>Cyanobacteriota</taxon>
        <taxon>Cyanophyceae</taxon>
        <taxon>Nostocales</taxon>
        <taxon>Nostocaceae</taxon>
        <taxon>Nostoc</taxon>
    </lineage>
</organism>
<sequence length="323" mass="38123">MNQLLCPGLYCPFPSQTNKYVDVLEEYSLEWVLRFNLLANESAYKRFCKSKFFFLAASAYPDSKFEELKITHDWLSWVFIWDDQCDLSELKKQPEVLNNFHQRYLEILNGAELTSQDTLFSHALIDLRKRTLQRASIKWFNYFISYLEDYFYGCVQEATNRAKGIVPDLDTYIMIRRSSVGVYAVLALSEFCNQFIIPDVLRNHHLVKKLELITTDIIAWSNDIFSASREIASGDVHNLIFVLHYHKKISLEKAIEQVVKIHNEEVHSLIKVESSLSFFSEELDVEITKYISGMHSWIRGNLDWCYESYRYHNLERLELTEFK</sequence>
<feature type="chain" id="PRO_0000418841" description="Germacrene A synthase">
    <location>
        <begin position="1"/>
        <end position="323"/>
    </location>
</feature>
<feature type="short sequence motif" description="DDXXD motif">
    <location>
        <begin position="82"/>
        <end position="86"/>
    </location>
</feature>
<feature type="binding site" evidence="1">
    <location>
        <position position="82"/>
    </location>
    <ligand>
        <name>Mg(2+)</name>
        <dbReference type="ChEBI" id="CHEBI:18420"/>
        <label>1</label>
    </ligand>
</feature>
<feature type="binding site" evidence="1">
    <location>
        <position position="82"/>
    </location>
    <ligand>
        <name>Mg(2+)</name>
        <dbReference type="ChEBI" id="CHEBI:18420"/>
        <label>2</label>
    </ligand>
</feature>
<feature type="binding site" evidence="1">
    <location>
        <position position="86"/>
    </location>
    <ligand>
        <name>Mg(2+)</name>
        <dbReference type="ChEBI" id="CHEBI:18420"/>
        <label>1</label>
    </ligand>
</feature>
<feature type="binding site" evidence="1">
    <location>
        <position position="86"/>
    </location>
    <ligand>
        <name>Mg(2+)</name>
        <dbReference type="ChEBI" id="CHEBI:18420"/>
        <label>2</label>
    </ligand>
</feature>
<feature type="binding site" evidence="1">
    <location>
        <position position="222"/>
    </location>
    <ligand>
        <name>Mg(2+)</name>
        <dbReference type="ChEBI" id="CHEBI:18420"/>
        <label>3</label>
    </ligand>
</feature>
<feature type="binding site" evidence="1">
    <location>
        <position position="226"/>
    </location>
    <ligand>
        <name>Mg(2+)</name>
        <dbReference type="ChEBI" id="CHEBI:18420"/>
        <label>3</label>
    </ligand>
</feature>
<feature type="binding site" evidence="1">
    <location>
        <position position="230"/>
    </location>
    <ligand>
        <name>Mg(2+)</name>
        <dbReference type="ChEBI" id="CHEBI:18420"/>
        <label>3</label>
    </ligand>
</feature>
<proteinExistence type="evidence at protein level"/>
<gene>
    <name type="ordered locus">Npun_R3832</name>
</gene>
<evidence type="ECO:0000250" key="1"/>
<evidence type="ECO:0000269" key="2">
    <source>
    </source>
</evidence>
<evidence type="ECO:0000305" key="3"/>
<protein>
    <recommendedName>
        <fullName>Germacrene A synthase</fullName>
        <ecNumber>4.2.3.90</ecNumber>
    </recommendedName>
    <alternativeName>
        <fullName>5-epi-alpha-selinene synthase</fullName>
    </alternativeName>
    <alternativeName>
        <fullName>8a-epi-alpha-selinene synthase</fullName>
    </alternativeName>
    <alternativeName>
        <fullName>Terpene synthase</fullName>
    </alternativeName>
</protein>